<reference key="1">
    <citation type="submission" date="2004-12" db="EMBL/GenBank/DDBJ databases">
        <title>The genome sequence of Borrelia hermsii and Borrelia turicatae: comparative analysis of two agents of endemic N. America relapsing fever.</title>
        <authorList>
            <person name="Porcella S.F."/>
            <person name="Raffel S.J."/>
            <person name="Schrumpf M.E."/>
            <person name="Montgomery B."/>
            <person name="Smith T."/>
            <person name="Schwan T.G."/>
        </authorList>
    </citation>
    <scope>NUCLEOTIDE SEQUENCE [LARGE SCALE GENOMIC DNA]</scope>
    <source>
        <strain>HS1 / DAH</strain>
    </source>
</reference>
<protein>
    <recommendedName>
        <fullName evidence="1">UDP-N-acetylglucosamine--N-acetylmuramyl-(pentapeptide) pyrophosphoryl-undecaprenol N-acetylglucosamine transferase</fullName>
        <ecNumber evidence="1">2.4.1.227</ecNumber>
    </recommendedName>
    <alternativeName>
        <fullName evidence="1">Undecaprenyl-PP-MurNAc-pentapeptide-UDPGlcNAc GlcNAc transferase</fullName>
    </alternativeName>
</protein>
<name>MURG_BORHD</name>
<feature type="chain" id="PRO_1000090406" description="UDP-N-acetylglucosamine--N-acetylmuramyl-(pentapeptide) pyrophosphoryl-undecaprenol N-acetylglucosamine transferase">
    <location>
        <begin position="1"/>
        <end position="362"/>
    </location>
</feature>
<feature type="binding site" evidence="1">
    <location>
        <begin position="14"/>
        <end position="16"/>
    </location>
    <ligand>
        <name>UDP-N-acetyl-alpha-D-glucosamine</name>
        <dbReference type="ChEBI" id="CHEBI:57705"/>
    </ligand>
</feature>
<feature type="binding site" evidence="1">
    <location>
        <position position="170"/>
    </location>
    <ligand>
        <name>UDP-N-acetyl-alpha-D-glucosamine</name>
        <dbReference type="ChEBI" id="CHEBI:57705"/>
    </ligand>
</feature>
<feature type="binding site" evidence="1">
    <location>
        <position position="199"/>
    </location>
    <ligand>
        <name>UDP-N-acetyl-alpha-D-glucosamine</name>
        <dbReference type="ChEBI" id="CHEBI:57705"/>
    </ligand>
</feature>
<feature type="binding site" evidence="1">
    <location>
        <position position="289"/>
    </location>
    <ligand>
        <name>UDP-N-acetyl-alpha-D-glucosamine</name>
        <dbReference type="ChEBI" id="CHEBI:57705"/>
    </ligand>
</feature>
<sequence>MNTKKRIFFTGGGTGGHVFPGIAIISKLKELDTNIEFFWLGQKGSMEDNIIKEHEYIKFIAIPSGKLRRYFSLQNFTDVFKVIFGIIKSFFIIKKYKPQIIYATGGFVSSPPIIAASLLRVKSITHEMDLDPGLATKINSKFASKIHISFKESTKYFKNKNVLYTGSPIRKEFSNPNPNIITELTQNTKKPIISIFGGSLGAEVLNKLTLNIKNKIDAYFIHQCGKNLDATRENNYLRSQFFNAEEMASIIKFSNIIISRAGAGAIKEFASAGACVIFIPFVKGSRGDQVRNTKILEEQNACLKIDEENLSESQIIDMIKEILTNKEKFDILKNNIKKFHNQDSSNLIANLLLKDFEDINAS</sequence>
<comment type="function">
    <text evidence="1">Cell wall formation. Catalyzes the transfer of a GlcNAc subunit on undecaprenyl-pyrophosphoryl-MurNAc-pentapeptide (lipid intermediate I) to form undecaprenyl-pyrophosphoryl-MurNAc-(pentapeptide)GlcNAc (lipid intermediate II).</text>
</comment>
<comment type="catalytic activity">
    <reaction evidence="1">
        <text>di-trans,octa-cis-undecaprenyl diphospho-N-acetyl-alpha-D-muramoyl-L-alanyl-D-glutamyl-meso-2,6-diaminopimeloyl-D-alanyl-D-alanine + UDP-N-acetyl-alpha-D-glucosamine = di-trans,octa-cis-undecaprenyl diphospho-[N-acetyl-alpha-D-glucosaminyl-(1-&gt;4)]-N-acetyl-alpha-D-muramoyl-L-alanyl-D-glutamyl-meso-2,6-diaminopimeloyl-D-alanyl-D-alanine + UDP + H(+)</text>
        <dbReference type="Rhea" id="RHEA:31227"/>
        <dbReference type="ChEBI" id="CHEBI:15378"/>
        <dbReference type="ChEBI" id="CHEBI:57705"/>
        <dbReference type="ChEBI" id="CHEBI:58223"/>
        <dbReference type="ChEBI" id="CHEBI:61387"/>
        <dbReference type="ChEBI" id="CHEBI:61388"/>
        <dbReference type="EC" id="2.4.1.227"/>
    </reaction>
</comment>
<comment type="pathway">
    <text evidence="1">Cell wall biogenesis; peptidoglycan biosynthesis.</text>
</comment>
<comment type="subcellular location">
    <subcellularLocation>
        <location evidence="1">Cell inner membrane</location>
        <topology evidence="1">Peripheral membrane protein</topology>
        <orientation evidence="1">Cytoplasmic side</orientation>
    </subcellularLocation>
</comment>
<comment type="similarity">
    <text evidence="1">Belongs to the glycosyltransferase 28 family. MurG subfamily.</text>
</comment>
<gene>
    <name evidence="1" type="primary">murG</name>
    <name type="ordered locus">BH0767</name>
</gene>
<keyword id="KW-0131">Cell cycle</keyword>
<keyword id="KW-0132">Cell division</keyword>
<keyword id="KW-0997">Cell inner membrane</keyword>
<keyword id="KW-1003">Cell membrane</keyword>
<keyword id="KW-0133">Cell shape</keyword>
<keyword id="KW-0961">Cell wall biogenesis/degradation</keyword>
<keyword id="KW-0328">Glycosyltransferase</keyword>
<keyword id="KW-0472">Membrane</keyword>
<keyword id="KW-0573">Peptidoglycan synthesis</keyword>
<keyword id="KW-0808">Transferase</keyword>
<accession>B2S1A8</accession>
<dbReference type="EC" id="2.4.1.227" evidence="1"/>
<dbReference type="EMBL" id="CP000048">
    <property type="protein sequence ID" value="AAX17262.1"/>
    <property type="molecule type" value="Genomic_DNA"/>
</dbReference>
<dbReference type="RefSeq" id="WP_012422512.1">
    <property type="nucleotide sequence ID" value="NZ_CP073136.1"/>
</dbReference>
<dbReference type="SMR" id="B2S1A8"/>
<dbReference type="CAZy" id="GT28">
    <property type="family name" value="Glycosyltransferase Family 28"/>
</dbReference>
<dbReference type="GeneID" id="71843596"/>
<dbReference type="KEGG" id="bhr:BH0767"/>
<dbReference type="HOGENOM" id="CLU_037404_0_0_12"/>
<dbReference type="UniPathway" id="UPA00219"/>
<dbReference type="Proteomes" id="UP000008834">
    <property type="component" value="Chromosome"/>
</dbReference>
<dbReference type="GO" id="GO:0005886">
    <property type="term" value="C:plasma membrane"/>
    <property type="evidence" value="ECO:0007669"/>
    <property type="project" value="UniProtKB-SubCell"/>
</dbReference>
<dbReference type="GO" id="GO:0051991">
    <property type="term" value="F:UDP-N-acetyl-D-glucosamine:N-acetylmuramoyl-L-alanyl-D-glutamyl-meso-2,6-diaminopimelyl-D-alanyl-D-alanine-diphosphoundecaprenol 4-beta-N-acetylglucosaminlytransferase activity"/>
    <property type="evidence" value="ECO:0007669"/>
    <property type="project" value="RHEA"/>
</dbReference>
<dbReference type="GO" id="GO:0050511">
    <property type="term" value="F:undecaprenyldiphospho-muramoylpentapeptide beta-N-acetylglucosaminyltransferase activity"/>
    <property type="evidence" value="ECO:0007669"/>
    <property type="project" value="UniProtKB-UniRule"/>
</dbReference>
<dbReference type="GO" id="GO:0005975">
    <property type="term" value="P:carbohydrate metabolic process"/>
    <property type="evidence" value="ECO:0007669"/>
    <property type="project" value="InterPro"/>
</dbReference>
<dbReference type="GO" id="GO:0051301">
    <property type="term" value="P:cell division"/>
    <property type="evidence" value="ECO:0007669"/>
    <property type="project" value="UniProtKB-KW"/>
</dbReference>
<dbReference type="GO" id="GO:0071555">
    <property type="term" value="P:cell wall organization"/>
    <property type="evidence" value="ECO:0007669"/>
    <property type="project" value="UniProtKB-KW"/>
</dbReference>
<dbReference type="GO" id="GO:0030259">
    <property type="term" value="P:lipid glycosylation"/>
    <property type="evidence" value="ECO:0007669"/>
    <property type="project" value="UniProtKB-UniRule"/>
</dbReference>
<dbReference type="GO" id="GO:0009252">
    <property type="term" value="P:peptidoglycan biosynthetic process"/>
    <property type="evidence" value="ECO:0007669"/>
    <property type="project" value="UniProtKB-UniRule"/>
</dbReference>
<dbReference type="GO" id="GO:0008360">
    <property type="term" value="P:regulation of cell shape"/>
    <property type="evidence" value="ECO:0007669"/>
    <property type="project" value="UniProtKB-KW"/>
</dbReference>
<dbReference type="CDD" id="cd03785">
    <property type="entry name" value="GT28_MurG"/>
    <property type="match status" value="1"/>
</dbReference>
<dbReference type="Gene3D" id="3.40.50.2000">
    <property type="entry name" value="Glycogen Phosphorylase B"/>
    <property type="match status" value="2"/>
</dbReference>
<dbReference type="HAMAP" id="MF_00033">
    <property type="entry name" value="MurG"/>
    <property type="match status" value="1"/>
</dbReference>
<dbReference type="InterPro" id="IPR006009">
    <property type="entry name" value="GlcNAc_MurG"/>
</dbReference>
<dbReference type="InterPro" id="IPR007235">
    <property type="entry name" value="Glyco_trans_28_C"/>
</dbReference>
<dbReference type="InterPro" id="IPR004276">
    <property type="entry name" value="GlycoTrans_28_N"/>
</dbReference>
<dbReference type="NCBIfam" id="TIGR01133">
    <property type="entry name" value="murG"/>
    <property type="match status" value="1"/>
</dbReference>
<dbReference type="PANTHER" id="PTHR21015:SF27">
    <property type="entry name" value="UDP-N-ACETYLGLUCOSAMINE--N-ACETYLMURAMYL-(PENTAPEPTIDE) PYROPHOSPHORYL-UNDECAPRENOL N-ACETYLGLUCOSAMINE TRANSFERASE"/>
    <property type="match status" value="1"/>
</dbReference>
<dbReference type="PANTHER" id="PTHR21015">
    <property type="entry name" value="UDP-N-ACETYLGLUCOSAMINE--N-ACETYLMURAMYL-(PENTAPEPTIDE) PYROPHOSPHORYL-UNDECAPRENOL N-ACETYLGLUCOSAMINE TRANSFERASE 1"/>
    <property type="match status" value="1"/>
</dbReference>
<dbReference type="Pfam" id="PF04101">
    <property type="entry name" value="Glyco_tran_28_C"/>
    <property type="match status" value="1"/>
</dbReference>
<dbReference type="Pfam" id="PF03033">
    <property type="entry name" value="Glyco_transf_28"/>
    <property type="match status" value="1"/>
</dbReference>
<dbReference type="SUPFAM" id="SSF53756">
    <property type="entry name" value="UDP-Glycosyltransferase/glycogen phosphorylase"/>
    <property type="match status" value="1"/>
</dbReference>
<organism>
    <name type="scientific">Borrelia hermsii (strain HS1 / DAH)</name>
    <dbReference type="NCBI Taxonomy" id="314723"/>
    <lineage>
        <taxon>Bacteria</taxon>
        <taxon>Pseudomonadati</taxon>
        <taxon>Spirochaetota</taxon>
        <taxon>Spirochaetia</taxon>
        <taxon>Spirochaetales</taxon>
        <taxon>Borreliaceae</taxon>
        <taxon>Borrelia</taxon>
    </lineage>
</organism>
<proteinExistence type="inferred from homology"/>
<evidence type="ECO:0000255" key="1">
    <source>
        <dbReference type="HAMAP-Rule" id="MF_00033"/>
    </source>
</evidence>